<dbReference type="EMBL" id="AAFI02000040">
    <property type="protein sequence ID" value="EAL66843.1"/>
    <property type="molecule type" value="Genomic_DNA"/>
</dbReference>
<dbReference type="RefSeq" id="XP_640812.1">
    <property type="nucleotide sequence ID" value="XM_635720.1"/>
</dbReference>
<dbReference type="SMR" id="Q54UG4"/>
<dbReference type="FunCoup" id="Q54UG4">
    <property type="interactions" value="541"/>
</dbReference>
<dbReference type="STRING" id="44689.Q54UG4"/>
<dbReference type="PaxDb" id="44689-DDB0220688"/>
<dbReference type="EnsemblProtists" id="EAL66843">
    <property type="protein sequence ID" value="EAL66843"/>
    <property type="gene ID" value="DDB_G0281093"/>
</dbReference>
<dbReference type="GeneID" id="8622866"/>
<dbReference type="KEGG" id="ddi:DDB_G0281093"/>
<dbReference type="dictyBase" id="DDB_G0281093">
    <property type="gene designation" value="rpl37A"/>
</dbReference>
<dbReference type="VEuPathDB" id="AmoebaDB:DDB_G0281093"/>
<dbReference type="eggNOG" id="KOG0402">
    <property type="taxonomic scope" value="Eukaryota"/>
</dbReference>
<dbReference type="HOGENOM" id="CLU_141199_1_0_1"/>
<dbReference type="InParanoid" id="Q54UG4"/>
<dbReference type="OMA" id="GPRYGRK"/>
<dbReference type="PhylomeDB" id="Q54UG4"/>
<dbReference type="PRO" id="PR:Q54UG4"/>
<dbReference type="Proteomes" id="UP000002195">
    <property type="component" value="Chromosome 3"/>
</dbReference>
<dbReference type="GO" id="GO:0022626">
    <property type="term" value="C:cytosolic ribosome"/>
    <property type="evidence" value="ECO:0000318"/>
    <property type="project" value="GO_Central"/>
</dbReference>
<dbReference type="GO" id="GO:1990904">
    <property type="term" value="C:ribonucleoprotein complex"/>
    <property type="evidence" value="ECO:0007669"/>
    <property type="project" value="UniProtKB-KW"/>
</dbReference>
<dbReference type="GO" id="GO:0003735">
    <property type="term" value="F:structural constituent of ribosome"/>
    <property type="evidence" value="ECO:0000250"/>
    <property type="project" value="dictyBase"/>
</dbReference>
<dbReference type="GO" id="GO:0008270">
    <property type="term" value="F:zinc ion binding"/>
    <property type="evidence" value="ECO:0007669"/>
    <property type="project" value="UniProtKB-KW"/>
</dbReference>
<dbReference type="GO" id="GO:0006412">
    <property type="term" value="P:translation"/>
    <property type="evidence" value="ECO:0000250"/>
    <property type="project" value="dictyBase"/>
</dbReference>
<dbReference type="FunFam" id="2.20.25.30:FF:000002">
    <property type="entry name" value="60S ribosomal protein L37a"/>
    <property type="match status" value="1"/>
</dbReference>
<dbReference type="Gene3D" id="2.20.25.30">
    <property type="match status" value="1"/>
</dbReference>
<dbReference type="HAMAP" id="MF_00327">
    <property type="entry name" value="Ribosomal_eL43"/>
    <property type="match status" value="1"/>
</dbReference>
<dbReference type="InterPro" id="IPR011331">
    <property type="entry name" value="Ribosomal_eL37/eL43"/>
</dbReference>
<dbReference type="InterPro" id="IPR002674">
    <property type="entry name" value="Ribosomal_eL43"/>
</dbReference>
<dbReference type="InterPro" id="IPR050522">
    <property type="entry name" value="Ribosomal_protein_eL43"/>
</dbReference>
<dbReference type="InterPro" id="IPR011332">
    <property type="entry name" value="Ribosomal_zn-bd"/>
</dbReference>
<dbReference type="NCBIfam" id="TIGR00280">
    <property type="entry name" value="eL43_euk_arch"/>
    <property type="match status" value="1"/>
</dbReference>
<dbReference type="NCBIfam" id="NF003058">
    <property type="entry name" value="PRK03976.1"/>
    <property type="match status" value="1"/>
</dbReference>
<dbReference type="PANTHER" id="PTHR48129">
    <property type="entry name" value="60S RIBOSOMAL PROTEIN L37A"/>
    <property type="match status" value="1"/>
</dbReference>
<dbReference type="PANTHER" id="PTHR48129:SF1">
    <property type="entry name" value="LARGE RIBOSOMAL SUBUNIT PROTEIN EL43"/>
    <property type="match status" value="1"/>
</dbReference>
<dbReference type="Pfam" id="PF01780">
    <property type="entry name" value="Ribosomal_L37ae"/>
    <property type="match status" value="1"/>
</dbReference>
<dbReference type="SUPFAM" id="SSF57829">
    <property type="entry name" value="Zn-binding ribosomal proteins"/>
    <property type="match status" value="1"/>
</dbReference>
<gene>
    <name type="primary">rpl37A</name>
    <name type="ORF">DDB_G0281093</name>
</gene>
<name>RL37A_DICDI</name>
<feature type="chain" id="PRO_0000323427" description="Large ribosomal subunit protein eL43">
    <location>
        <begin position="1"/>
        <end position="91"/>
    </location>
</feature>
<feature type="zinc finger region" description="C4-type" evidence="1">
    <location>
        <begin position="39"/>
        <end position="60"/>
    </location>
</feature>
<keyword id="KW-0479">Metal-binding</keyword>
<keyword id="KW-1185">Reference proteome</keyword>
<keyword id="KW-0687">Ribonucleoprotein</keyword>
<keyword id="KW-0689">Ribosomal protein</keyword>
<keyword id="KW-0862">Zinc</keyword>
<keyword id="KW-0863">Zinc-finger</keyword>
<organism>
    <name type="scientific">Dictyostelium discoideum</name>
    <name type="common">Social amoeba</name>
    <dbReference type="NCBI Taxonomy" id="44689"/>
    <lineage>
        <taxon>Eukaryota</taxon>
        <taxon>Amoebozoa</taxon>
        <taxon>Evosea</taxon>
        <taxon>Eumycetozoa</taxon>
        <taxon>Dictyostelia</taxon>
        <taxon>Dictyosteliales</taxon>
        <taxon>Dictyosteliaceae</taxon>
        <taxon>Dictyostelium</taxon>
    </lineage>
</organism>
<sequence>MAKRTKKVGVVGKYGTRYGASLRKQVKKMEITQHGTYTCSFCGKDAVRRSSVGIWKCNGCRKVLAGGAWTMSTAAGATVRSTIRRLRELNN</sequence>
<proteinExistence type="inferred from homology"/>
<reference key="1">
    <citation type="journal article" date="2005" name="Nature">
        <title>The genome of the social amoeba Dictyostelium discoideum.</title>
        <authorList>
            <person name="Eichinger L."/>
            <person name="Pachebat J.A."/>
            <person name="Gloeckner G."/>
            <person name="Rajandream M.A."/>
            <person name="Sucgang R."/>
            <person name="Berriman M."/>
            <person name="Song J."/>
            <person name="Olsen R."/>
            <person name="Szafranski K."/>
            <person name="Xu Q."/>
            <person name="Tunggal B."/>
            <person name="Kummerfeld S."/>
            <person name="Madera M."/>
            <person name="Konfortov B.A."/>
            <person name="Rivero F."/>
            <person name="Bankier A.T."/>
            <person name="Lehmann R."/>
            <person name="Hamlin N."/>
            <person name="Davies R."/>
            <person name="Gaudet P."/>
            <person name="Fey P."/>
            <person name="Pilcher K."/>
            <person name="Chen G."/>
            <person name="Saunders D."/>
            <person name="Sodergren E.J."/>
            <person name="Davis P."/>
            <person name="Kerhornou A."/>
            <person name="Nie X."/>
            <person name="Hall N."/>
            <person name="Anjard C."/>
            <person name="Hemphill L."/>
            <person name="Bason N."/>
            <person name="Farbrother P."/>
            <person name="Desany B."/>
            <person name="Just E."/>
            <person name="Morio T."/>
            <person name="Rost R."/>
            <person name="Churcher C.M."/>
            <person name="Cooper J."/>
            <person name="Haydock S."/>
            <person name="van Driessche N."/>
            <person name="Cronin A."/>
            <person name="Goodhead I."/>
            <person name="Muzny D.M."/>
            <person name="Mourier T."/>
            <person name="Pain A."/>
            <person name="Lu M."/>
            <person name="Harper D."/>
            <person name="Lindsay R."/>
            <person name="Hauser H."/>
            <person name="James K.D."/>
            <person name="Quiles M."/>
            <person name="Madan Babu M."/>
            <person name="Saito T."/>
            <person name="Buchrieser C."/>
            <person name="Wardroper A."/>
            <person name="Felder M."/>
            <person name="Thangavelu M."/>
            <person name="Johnson D."/>
            <person name="Knights A."/>
            <person name="Loulseged H."/>
            <person name="Mungall K.L."/>
            <person name="Oliver K."/>
            <person name="Price C."/>
            <person name="Quail M.A."/>
            <person name="Urushihara H."/>
            <person name="Hernandez J."/>
            <person name="Rabbinowitsch E."/>
            <person name="Steffen D."/>
            <person name="Sanders M."/>
            <person name="Ma J."/>
            <person name="Kohara Y."/>
            <person name="Sharp S."/>
            <person name="Simmonds M.N."/>
            <person name="Spiegler S."/>
            <person name="Tivey A."/>
            <person name="Sugano S."/>
            <person name="White B."/>
            <person name="Walker D."/>
            <person name="Woodward J.R."/>
            <person name="Winckler T."/>
            <person name="Tanaka Y."/>
            <person name="Shaulsky G."/>
            <person name="Schleicher M."/>
            <person name="Weinstock G.M."/>
            <person name="Rosenthal A."/>
            <person name="Cox E.C."/>
            <person name="Chisholm R.L."/>
            <person name="Gibbs R.A."/>
            <person name="Loomis W.F."/>
            <person name="Platzer M."/>
            <person name="Kay R.R."/>
            <person name="Williams J.G."/>
            <person name="Dear P.H."/>
            <person name="Noegel A.A."/>
            <person name="Barrell B.G."/>
            <person name="Kuspa A."/>
        </authorList>
    </citation>
    <scope>NUCLEOTIDE SEQUENCE [LARGE SCALE GENOMIC DNA]</scope>
    <source>
        <strain>AX4</strain>
    </source>
</reference>
<accession>Q54UG4</accession>
<protein>
    <recommendedName>
        <fullName evidence="2">Large ribosomal subunit protein eL43</fullName>
    </recommendedName>
    <alternativeName>
        <fullName>60S ribosomal protein L37a</fullName>
    </alternativeName>
</protein>
<evidence type="ECO:0000250" key="1"/>
<evidence type="ECO:0000305" key="2"/>
<comment type="similarity">
    <text evidence="2">Belongs to the eukaryotic ribosomal protein eL43 family.</text>
</comment>